<keyword id="KW-1185">Reference proteome</keyword>
<keyword id="KW-0687">Ribonucleoprotein</keyword>
<keyword id="KW-0689">Ribosomal protein</keyword>
<keyword id="KW-0694">RNA-binding</keyword>
<keyword id="KW-0699">rRNA-binding</keyword>
<proteinExistence type="inferred from homology"/>
<comment type="function">
    <text evidence="1">One of the primary rRNA binding proteins, it binds directly to 16S rRNA where it nucleates assembly of the body of the 30S subunit.</text>
</comment>
<comment type="function">
    <text evidence="1">With S5 and S12 plays an important role in translational accuracy.</text>
</comment>
<comment type="subunit">
    <text evidence="1">Part of the 30S ribosomal subunit. Contacts protein S5. The interaction surface between S4 and S5 is involved in control of translational fidelity.</text>
</comment>
<comment type="similarity">
    <text evidence="1">Belongs to the universal ribosomal protein uS4 family.</text>
</comment>
<accession>Q67JX0</accession>
<name>RS4A_SYMTH</name>
<protein>
    <recommendedName>
        <fullName evidence="1">Small ribosomal subunit protein uS4A</fullName>
    </recommendedName>
    <alternativeName>
        <fullName evidence="2">30S ribosomal protein S4 1</fullName>
    </alternativeName>
</protein>
<feature type="chain" id="PRO_0000228933" description="Small ribosomal subunit protein uS4A">
    <location>
        <begin position="1"/>
        <end position="207"/>
    </location>
</feature>
<feature type="domain" description="S4 RNA-binding" evidence="1">
    <location>
        <begin position="98"/>
        <end position="161"/>
    </location>
</feature>
<reference key="1">
    <citation type="journal article" date="2004" name="Nucleic Acids Res.">
        <title>Genome sequence of Symbiobacterium thermophilum, an uncultivable bacterium that depends on microbial commensalism.</title>
        <authorList>
            <person name="Ueda K."/>
            <person name="Yamashita A."/>
            <person name="Ishikawa J."/>
            <person name="Shimada M."/>
            <person name="Watsuji T."/>
            <person name="Morimura K."/>
            <person name="Ikeda H."/>
            <person name="Hattori M."/>
            <person name="Beppu T."/>
        </authorList>
    </citation>
    <scope>NUCLEOTIDE SEQUENCE [LARGE SCALE GENOMIC DNA]</scope>
    <source>
        <strain>DSM 24528 / JCM 14929 / IAM 14863 / T</strain>
    </source>
</reference>
<gene>
    <name evidence="1" type="primary">rpsD1</name>
    <name type="synonym">rpsD</name>
    <name type="ordered locus">STH3048</name>
</gene>
<sequence>MARYTGPVCRLCRREGVKLYLKGEKCYSDKCPIVKRATPPGQHGASRRKPTEYAIQLREKQKARRYYGVLERQFERYFEMASRKKGVTGEVLLQTLERRLDNVVYRMGFAASRAEARQIVKHSHIEVNGRKVNIPSYLVREGDVVAVRESSREHKRIKELAAAATRTVPAWLSVDPEALRGTVLRLPNRDEIDTPVQEQLIVEFYSR</sequence>
<organism>
    <name type="scientific">Symbiobacterium thermophilum (strain DSM 24528 / JCM 14929 / IAM 14863 / T)</name>
    <dbReference type="NCBI Taxonomy" id="292459"/>
    <lineage>
        <taxon>Bacteria</taxon>
        <taxon>Bacillati</taxon>
        <taxon>Bacillota</taxon>
        <taxon>Clostridia</taxon>
        <taxon>Eubacteriales</taxon>
        <taxon>Symbiobacteriaceae</taxon>
        <taxon>Symbiobacterium</taxon>
    </lineage>
</organism>
<evidence type="ECO:0000255" key="1">
    <source>
        <dbReference type="HAMAP-Rule" id="MF_01306"/>
    </source>
</evidence>
<evidence type="ECO:0000305" key="2"/>
<dbReference type="EMBL" id="AP006840">
    <property type="protein sequence ID" value="BAD42030.1"/>
    <property type="molecule type" value="Genomic_DNA"/>
</dbReference>
<dbReference type="RefSeq" id="WP_011197163.1">
    <property type="nucleotide sequence ID" value="NC_006177.1"/>
</dbReference>
<dbReference type="SMR" id="Q67JX0"/>
<dbReference type="STRING" id="292459.STH3048"/>
<dbReference type="KEGG" id="sth:STH3048"/>
<dbReference type="eggNOG" id="COG0522">
    <property type="taxonomic scope" value="Bacteria"/>
</dbReference>
<dbReference type="HOGENOM" id="CLU_092403_0_1_9"/>
<dbReference type="OrthoDB" id="9803672at2"/>
<dbReference type="Proteomes" id="UP000000417">
    <property type="component" value="Chromosome"/>
</dbReference>
<dbReference type="GO" id="GO:0015935">
    <property type="term" value="C:small ribosomal subunit"/>
    <property type="evidence" value="ECO:0007669"/>
    <property type="project" value="InterPro"/>
</dbReference>
<dbReference type="GO" id="GO:0019843">
    <property type="term" value="F:rRNA binding"/>
    <property type="evidence" value="ECO:0007669"/>
    <property type="project" value="UniProtKB-UniRule"/>
</dbReference>
<dbReference type="GO" id="GO:0003735">
    <property type="term" value="F:structural constituent of ribosome"/>
    <property type="evidence" value="ECO:0007669"/>
    <property type="project" value="InterPro"/>
</dbReference>
<dbReference type="GO" id="GO:0042274">
    <property type="term" value="P:ribosomal small subunit biogenesis"/>
    <property type="evidence" value="ECO:0007669"/>
    <property type="project" value="TreeGrafter"/>
</dbReference>
<dbReference type="GO" id="GO:0006412">
    <property type="term" value="P:translation"/>
    <property type="evidence" value="ECO:0007669"/>
    <property type="project" value="UniProtKB-UniRule"/>
</dbReference>
<dbReference type="CDD" id="cd00165">
    <property type="entry name" value="S4"/>
    <property type="match status" value="1"/>
</dbReference>
<dbReference type="FunFam" id="1.10.1050.10:FF:000001">
    <property type="entry name" value="30S ribosomal protein S4"/>
    <property type="match status" value="1"/>
</dbReference>
<dbReference type="FunFam" id="3.10.290.10:FF:000001">
    <property type="entry name" value="30S ribosomal protein S4"/>
    <property type="match status" value="1"/>
</dbReference>
<dbReference type="Gene3D" id="1.10.1050.10">
    <property type="entry name" value="Ribosomal Protein S4 Delta 41, Chain A, domain 1"/>
    <property type="match status" value="1"/>
</dbReference>
<dbReference type="Gene3D" id="3.10.290.10">
    <property type="entry name" value="RNA-binding S4 domain"/>
    <property type="match status" value="1"/>
</dbReference>
<dbReference type="HAMAP" id="MF_01306_B">
    <property type="entry name" value="Ribosomal_uS4_B"/>
    <property type="match status" value="1"/>
</dbReference>
<dbReference type="InterPro" id="IPR022801">
    <property type="entry name" value="Ribosomal_uS4"/>
</dbReference>
<dbReference type="InterPro" id="IPR005709">
    <property type="entry name" value="Ribosomal_uS4_bac-type"/>
</dbReference>
<dbReference type="InterPro" id="IPR018079">
    <property type="entry name" value="Ribosomal_uS4_CS"/>
</dbReference>
<dbReference type="InterPro" id="IPR001912">
    <property type="entry name" value="Ribosomal_uS4_N"/>
</dbReference>
<dbReference type="InterPro" id="IPR002942">
    <property type="entry name" value="S4_RNA-bd"/>
</dbReference>
<dbReference type="InterPro" id="IPR036986">
    <property type="entry name" value="S4_RNA-bd_sf"/>
</dbReference>
<dbReference type="NCBIfam" id="NF003717">
    <property type="entry name" value="PRK05327.1"/>
    <property type="match status" value="1"/>
</dbReference>
<dbReference type="NCBIfam" id="TIGR01017">
    <property type="entry name" value="rpsD_bact"/>
    <property type="match status" value="1"/>
</dbReference>
<dbReference type="PANTHER" id="PTHR11831">
    <property type="entry name" value="30S 40S RIBOSOMAL PROTEIN"/>
    <property type="match status" value="1"/>
</dbReference>
<dbReference type="PANTHER" id="PTHR11831:SF4">
    <property type="entry name" value="SMALL RIBOSOMAL SUBUNIT PROTEIN US4M"/>
    <property type="match status" value="1"/>
</dbReference>
<dbReference type="Pfam" id="PF00163">
    <property type="entry name" value="Ribosomal_S4"/>
    <property type="match status" value="1"/>
</dbReference>
<dbReference type="Pfam" id="PF01479">
    <property type="entry name" value="S4"/>
    <property type="match status" value="1"/>
</dbReference>
<dbReference type="SMART" id="SM01390">
    <property type="entry name" value="Ribosomal_S4"/>
    <property type="match status" value="1"/>
</dbReference>
<dbReference type="SMART" id="SM00363">
    <property type="entry name" value="S4"/>
    <property type="match status" value="1"/>
</dbReference>
<dbReference type="SUPFAM" id="SSF55174">
    <property type="entry name" value="Alpha-L RNA-binding motif"/>
    <property type="match status" value="1"/>
</dbReference>
<dbReference type="PROSITE" id="PS00632">
    <property type="entry name" value="RIBOSOMAL_S4"/>
    <property type="match status" value="1"/>
</dbReference>
<dbReference type="PROSITE" id="PS50889">
    <property type="entry name" value="S4"/>
    <property type="match status" value="1"/>
</dbReference>